<organism evidence="7">
    <name type="scientific">Ixodes ricinus</name>
    <name type="common">Common tick</name>
    <name type="synonym">Acarus ricinus</name>
    <dbReference type="NCBI Taxonomy" id="34613"/>
    <lineage>
        <taxon>Eukaryota</taxon>
        <taxon>Metazoa</taxon>
        <taxon>Ecdysozoa</taxon>
        <taxon>Arthropoda</taxon>
        <taxon>Chelicerata</taxon>
        <taxon>Arachnida</taxon>
        <taxon>Acari</taxon>
        <taxon>Parasitiformes</taxon>
        <taxon>Ixodida</taxon>
        <taxon>Ixodoidea</taxon>
        <taxon>Ixodidae</taxon>
        <taxon>Ixodinae</taxon>
        <taxon>Ixodes</taxon>
    </lineage>
</organism>
<comment type="function">
    <text evidence="4">Salivary chemokine-binding protein which binds to host chemokines CXCL1, CXCL2, CXCL3, CXCL4, CXCL5, CXCL6, CXCL10, CXCL11 and CXCL13.</text>
</comment>
<comment type="subcellular location">
    <subcellularLocation>
        <location evidence="6">Secreted</location>
    </subcellularLocation>
</comment>
<name>E1080_IXORI</name>
<reference evidence="7" key="1">
    <citation type="journal article" date="2015" name="PLoS Negl. Trop. Dis.">
        <title>Deep Sequencing Analysis of the Ixodes ricinus Haemocytome.</title>
        <authorList>
            <person name="Kotsyfakis M."/>
            <person name="Kopacek P."/>
            <person name="Franta Z."/>
            <person name="Pedra J.H."/>
            <person name="Ribeiro J.M."/>
        </authorList>
    </citation>
    <scope>NUCLEOTIDE SEQUENCE [LARGE SCALE MRNA]</scope>
</reference>
<reference evidence="6" key="2">
    <citation type="journal article" date="2019" name="J. Biol. Chem.">
        <title>A knottin scaffold directs the CXC-chemokine-binding specificity of tick evasins.</title>
        <authorList>
            <person name="Lee A.W."/>
            <person name="Deruaz M."/>
            <person name="Lynch C."/>
            <person name="Davies G."/>
            <person name="Singh K."/>
            <person name="Alenazi Y."/>
            <person name="Eaton J.R.O."/>
            <person name="Kawamura A."/>
            <person name="Shaw J."/>
            <person name="Proudfoot A.E.I."/>
            <person name="Dias J.M."/>
            <person name="Bhattacharya S."/>
        </authorList>
    </citation>
    <scope>FUNCTION</scope>
</reference>
<sequence length="118" mass="13176">FFQLAVFVVILFNINLLSASAGSKGSSAPQSSGDSVVAEFCDTNCTMKKDGKWTECNGDCFCVHVGNETVGRCMRLDGDYDYTSSKTTRRNKKTRNGLCRLDRNRTTVDYPERNTREP</sequence>
<keyword id="KW-1015">Disulfide bond</keyword>
<keyword id="KW-0325">Glycoprotein</keyword>
<keyword id="KW-0964">Secreted</keyword>
<keyword id="KW-0732">Signal</keyword>
<proteinExistence type="evidence at transcript level"/>
<feature type="signal peptide" evidence="2">
    <location>
        <begin position="1" status="less than"/>
        <end position="19"/>
    </location>
</feature>
<feature type="chain" id="PRO_5001866725" description="Evasin P1080" evidence="2">
    <location>
        <begin position="20"/>
        <end position="118"/>
    </location>
</feature>
<feature type="glycosylation site" description="N-linked (GlcNAc...) asparagine" evidence="3">
    <location>
        <position position="44"/>
    </location>
</feature>
<feature type="glycosylation site" description="N-linked (GlcNAc...) asparagine" evidence="3">
    <location>
        <position position="67"/>
    </location>
</feature>
<feature type="glycosylation site" description="N-linked (GlcNAc...) asparagine" evidence="3">
    <location>
        <position position="104"/>
    </location>
</feature>
<feature type="disulfide bond" evidence="1">
    <location>
        <begin position="41"/>
        <end position="60"/>
    </location>
</feature>
<feature type="disulfide bond" evidence="1">
    <location>
        <begin position="45"/>
        <end position="62"/>
    </location>
</feature>
<feature type="disulfide bond" evidence="1">
    <location>
        <begin position="56"/>
        <end position="73"/>
    </location>
</feature>
<feature type="non-terminal residue" evidence="7">
    <location>
        <position position="1"/>
    </location>
</feature>
<protein>
    <recommendedName>
        <fullName evidence="5">Evasin P1080</fullName>
    </recommendedName>
</protein>
<accession>A0A090XBL6</accession>
<dbReference type="EMBL" id="GBIH01002215">
    <property type="protein sequence ID" value="JAC92495.1"/>
    <property type="molecule type" value="mRNA"/>
</dbReference>
<dbReference type="GO" id="GO:0005576">
    <property type="term" value="C:extracellular region"/>
    <property type="evidence" value="ECO:0007669"/>
    <property type="project" value="UniProtKB-SubCell"/>
</dbReference>
<dbReference type="GO" id="GO:0019958">
    <property type="term" value="F:C-X-C chemokine binding"/>
    <property type="evidence" value="ECO:0000314"/>
    <property type="project" value="UniProtKB"/>
</dbReference>
<evidence type="ECO:0000250" key="1">
    <source>
        <dbReference type="UniProtKB" id="P0C8E8"/>
    </source>
</evidence>
<evidence type="ECO:0000255" key="2"/>
<evidence type="ECO:0000255" key="3">
    <source>
        <dbReference type="PROSITE-ProRule" id="PRU00498"/>
    </source>
</evidence>
<evidence type="ECO:0000269" key="4">
    <source>
    </source>
</evidence>
<evidence type="ECO:0000303" key="5">
    <source>
    </source>
</evidence>
<evidence type="ECO:0000305" key="6"/>
<evidence type="ECO:0000312" key="7">
    <source>
        <dbReference type="EMBL" id="JAC92495.1"/>
    </source>
</evidence>